<name>MURG_BORPA</name>
<evidence type="ECO:0000255" key="1">
    <source>
        <dbReference type="HAMAP-Rule" id="MF_00033"/>
    </source>
</evidence>
<accession>Q7W4B4</accession>
<reference key="1">
    <citation type="journal article" date="2003" name="Nat. Genet.">
        <title>Comparative analysis of the genome sequences of Bordetella pertussis, Bordetella parapertussis and Bordetella bronchiseptica.</title>
        <authorList>
            <person name="Parkhill J."/>
            <person name="Sebaihia M."/>
            <person name="Preston A."/>
            <person name="Murphy L.D."/>
            <person name="Thomson N.R."/>
            <person name="Harris D.E."/>
            <person name="Holden M.T.G."/>
            <person name="Churcher C.M."/>
            <person name="Bentley S.D."/>
            <person name="Mungall K.L."/>
            <person name="Cerdeno-Tarraga A.-M."/>
            <person name="Temple L."/>
            <person name="James K.D."/>
            <person name="Harris B."/>
            <person name="Quail M.A."/>
            <person name="Achtman M."/>
            <person name="Atkin R."/>
            <person name="Baker S."/>
            <person name="Basham D."/>
            <person name="Bason N."/>
            <person name="Cherevach I."/>
            <person name="Chillingworth T."/>
            <person name="Collins M."/>
            <person name="Cronin A."/>
            <person name="Davis P."/>
            <person name="Doggett J."/>
            <person name="Feltwell T."/>
            <person name="Goble A."/>
            <person name="Hamlin N."/>
            <person name="Hauser H."/>
            <person name="Holroyd S."/>
            <person name="Jagels K."/>
            <person name="Leather S."/>
            <person name="Moule S."/>
            <person name="Norberczak H."/>
            <person name="O'Neil S."/>
            <person name="Ormond D."/>
            <person name="Price C."/>
            <person name="Rabbinowitsch E."/>
            <person name="Rutter S."/>
            <person name="Sanders M."/>
            <person name="Saunders D."/>
            <person name="Seeger K."/>
            <person name="Sharp S."/>
            <person name="Simmonds M."/>
            <person name="Skelton J."/>
            <person name="Squares R."/>
            <person name="Squares S."/>
            <person name="Stevens K."/>
            <person name="Unwin L."/>
            <person name="Whitehead S."/>
            <person name="Barrell B.G."/>
            <person name="Maskell D.J."/>
        </authorList>
    </citation>
    <scope>NUCLEOTIDE SEQUENCE [LARGE SCALE GENOMIC DNA]</scope>
    <source>
        <strain>12822 / ATCC BAA-587 / NCTC 13253</strain>
    </source>
</reference>
<comment type="function">
    <text evidence="1">Cell wall formation. Catalyzes the transfer of a GlcNAc subunit on undecaprenyl-pyrophosphoryl-MurNAc-pentapeptide (lipid intermediate I) to form undecaprenyl-pyrophosphoryl-MurNAc-(pentapeptide)GlcNAc (lipid intermediate II).</text>
</comment>
<comment type="catalytic activity">
    <reaction evidence="1">
        <text>di-trans,octa-cis-undecaprenyl diphospho-N-acetyl-alpha-D-muramoyl-L-alanyl-D-glutamyl-meso-2,6-diaminopimeloyl-D-alanyl-D-alanine + UDP-N-acetyl-alpha-D-glucosamine = di-trans,octa-cis-undecaprenyl diphospho-[N-acetyl-alpha-D-glucosaminyl-(1-&gt;4)]-N-acetyl-alpha-D-muramoyl-L-alanyl-D-glutamyl-meso-2,6-diaminopimeloyl-D-alanyl-D-alanine + UDP + H(+)</text>
        <dbReference type="Rhea" id="RHEA:31227"/>
        <dbReference type="ChEBI" id="CHEBI:15378"/>
        <dbReference type="ChEBI" id="CHEBI:57705"/>
        <dbReference type="ChEBI" id="CHEBI:58223"/>
        <dbReference type="ChEBI" id="CHEBI:61387"/>
        <dbReference type="ChEBI" id="CHEBI:61388"/>
        <dbReference type="EC" id="2.4.1.227"/>
    </reaction>
</comment>
<comment type="pathway">
    <text evidence="1">Cell wall biogenesis; peptidoglycan biosynthesis.</text>
</comment>
<comment type="subcellular location">
    <subcellularLocation>
        <location evidence="1">Cell inner membrane</location>
        <topology evidence="1">Peripheral membrane protein</topology>
        <orientation evidence="1">Cytoplasmic side</orientation>
    </subcellularLocation>
</comment>
<comment type="similarity">
    <text evidence="1">Belongs to the glycosyltransferase 28 family. MurG subfamily.</text>
</comment>
<sequence length="357" mass="37893">MSAPTILIMAGGTGGHIMPGLAVAEVLRERGWRVLWLGNPDKMEGRLVPPRGIELVPLRFQGVRGRGAAALLKLPFLLARACAQAWRRLADIRPDVVLGMGGYVAFPGGVMAALRRMPLVVHEQNAVAGTANRWLARLARRVLSGFPGVLPRGEALGNPVRADLCALPEPAERYAGRSGALRVLVVGGSLGAHALNTTVPQALALLPEQARPQVVHQAGEQHLPALQQAYAQAGVQADCRAFIDDMAGAMAQADLLICRAGAMTVSEVAAAGVAALFVPFPHAIDDHQTANARFLSDAQAAWLQPQATLTPQWLAQWLGQRTRQELQAVAGRARTHALPRAAAHIADVCEQAARRAS</sequence>
<feature type="chain" id="PRO_0000109148" description="UDP-N-acetylglucosamine--N-acetylmuramyl-(pentapeptide) pyrophosphoryl-undecaprenol N-acetylglucosamine transferase">
    <location>
        <begin position="1"/>
        <end position="357"/>
    </location>
</feature>
<feature type="binding site" evidence="1">
    <location>
        <begin position="13"/>
        <end position="15"/>
    </location>
    <ligand>
        <name>UDP-N-acetyl-alpha-D-glucosamine</name>
        <dbReference type="ChEBI" id="CHEBI:57705"/>
    </ligand>
</feature>
<feature type="binding site" evidence="1">
    <location>
        <position position="125"/>
    </location>
    <ligand>
        <name>UDP-N-acetyl-alpha-D-glucosamine</name>
        <dbReference type="ChEBI" id="CHEBI:57705"/>
    </ligand>
</feature>
<feature type="binding site" evidence="1">
    <location>
        <position position="161"/>
    </location>
    <ligand>
        <name>UDP-N-acetyl-alpha-D-glucosamine</name>
        <dbReference type="ChEBI" id="CHEBI:57705"/>
    </ligand>
</feature>
<feature type="binding site" evidence="1">
    <location>
        <position position="189"/>
    </location>
    <ligand>
        <name>UDP-N-acetyl-alpha-D-glucosamine</name>
        <dbReference type="ChEBI" id="CHEBI:57705"/>
    </ligand>
</feature>
<feature type="binding site" evidence="1">
    <location>
        <position position="243"/>
    </location>
    <ligand>
        <name>UDP-N-acetyl-alpha-D-glucosamine</name>
        <dbReference type="ChEBI" id="CHEBI:57705"/>
    </ligand>
</feature>
<feature type="binding site" evidence="1">
    <location>
        <position position="288"/>
    </location>
    <ligand>
        <name>UDP-N-acetyl-alpha-D-glucosamine</name>
        <dbReference type="ChEBI" id="CHEBI:57705"/>
    </ligand>
</feature>
<dbReference type="EC" id="2.4.1.227" evidence="1"/>
<dbReference type="EMBL" id="BX640434">
    <property type="protein sequence ID" value="CAE39035.1"/>
    <property type="molecule type" value="Genomic_DNA"/>
</dbReference>
<dbReference type="RefSeq" id="WP_010929227.1">
    <property type="nucleotide sequence ID" value="NC_002928.3"/>
</dbReference>
<dbReference type="SMR" id="Q7W4B4"/>
<dbReference type="CAZy" id="GT28">
    <property type="family name" value="Glycosyltransferase Family 28"/>
</dbReference>
<dbReference type="GeneID" id="93205541"/>
<dbReference type="KEGG" id="bpa:BPP3752"/>
<dbReference type="HOGENOM" id="CLU_037404_2_1_4"/>
<dbReference type="UniPathway" id="UPA00219"/>
<dbReference type="Proteomes" id="UP000001421">
    <property type="component" value="Chromosome"/>
</dbReference>
<dbReference type="GO" id="GO:0005886">
    <property type="term" value="C:plasma membrane"/>
    <property type="evidence" value="ECO:0007669"/>
    <property type="project" value="UniProtKB-SubCell"/>
</dbReference>
<dbReference type="GO" id="GO:0051991">
    <property type="term" value="F:UDP-N-acetyl-D-glucosamine:N-acetylmuramoyl-L-alanyl-D-glutamyl-meso-2,6-diaminopimelyl-D-alanyl-D-alanine-diphosphoundecaprenol 4-beta-N-acetylglucosaminlytransferase activity"/>
    <property type="evidence" value="ECO:0007669"/>
    <property type="project" value="RHEA"/>
</dbReference>
<dbReference type="GO" id="GO:0050511">
    <property type="term" value="F:undecaprenyldiphospho-muramoylpentapeptide beta-N-acetylglucosaminyltransferase activity"/>
    <property type="evidence" value="ECO:0007669"/>
    <property type="project" value="UniProtKB-UniRule"/>
</dbReference>
<dbReference type="GO" id="GO:0005975">
    <property type="term" value="P:carbohydrate metabolic process"/>
    <property type="evidence" value="ECO:0007669"/>
    <property type="project" value="InterPro"/>
</dbReference>
<dbReference type="GO" id="GO:0051301">
    <property type="term" value="P:cell division"/>
    <property type="evidence" value="ECO:0007669"/>
    <property type="project" value="UniProtKB-KW"/>
</dbReference>
<dbReference type="GO" id="GO:0071555">
    <property type="term" value="P:cell wall organization"/>
    <property type="evidence" value="ECO:0007669"/>
    <property type="project" value="UniProtKB-KW"/>
</dbReference>
<dbReference type="GO" id="GO:0030259">
    <property type="term" value="P:lipid glycosylation"/>
    <property type="evidence" value="ECO:0007669"/>
    <property type="project" value="UniProtKB-UniRule"/>
</dbReference>
<dbReference type="GO" id="GO:0009252">
    <property type="term" value="P:peptidoglycan biosynthetic process"/>
    <property type="evidence" value="ECO:0007669"/>
    <property type="project" value="UniProtKB-UniRule"/>
</dbReference>
<dbReference type="GO" id="GO:0008360">
    <property type="term" value="P:regulation of cell shape"/>
    <property type="evidence" value="ECO:0007669"/>
    <property type="project" value="UniProtKB-KW"/>
</dbReference>
<dbReference type="CDD" id="cd03785">
    <property type="entry name" value="GT28_MurG"/>
    <property type="match status" value="1"/>
</dbReference>
<dbReference type="Gene3D" id="3.40.50.2000">
    <property type="entry name" value="Glycogen Phosphorylase B"/>
    <property type="match status" value="2"/>
</dbReference>
<dbReference type="HAMAP" id="MF_00033">
    <property type="entry name" value="MurG"/>
    <property type="match status" value="1"/>
</dbReference>
<dbReference type="InterPro" id="IPR006009">
    <property type="entry name" value="GlcNAc_MurG"/>
</dbReference>
<dbReference type="InterPro" id="IPR007235">
    <property type="entry name" value="Glyco_trans_28_C"/>
</dbReference>
<dbReference type="InterPro" id="IPR004276">
    <property type="entry name" value="GlycoTrans_28_N"/>
</dbReference>
<dbReference type="NCBIfam" id="TIGR01133">
    <property type="entry name" value="murG"/>
    <property type="match status" value="1"/>
</dbReference>
<dbReference type="PANTHER" id="PTHR21015:SF22">
    <property type="entry name" value="GLYCOSYLTRANSFERASE"/>
    <property type="match status" value="1"/>
</dbReference>
<dbReference type="PANTHER" id="PTHR21015">
    <property type="entry name" value="UDP-N-ACETYLGLUCOSAMINE--N-ACETYLMURAMYL-(PENTAPEPTIDE) PYROPHOSPHORYL-UNDECAPRENOL N-ACETYLGLUCOSAMINE TRANSFERASE 1"/>
    <property type="match status" value="1"/>
</dbReference>
<dbReference type="Pfam" id="PF04101">
    <property type="entry name" value="Glyco_tran_28_C"/>
    <property type="match status" value="1"/>
</dbReference>
<dbReference type="Pfam" id="PF03033">
    <property type="entry name" value="Glyco_transf_28"/>
    <property type="match status" value="1"/>
</dbReference>
<dbReference type="SUPFAM" id="SSF53756">
    <property type="entry name" value="UDP-Glycosyltransferase/glycogen phosphorylase"/>
    <property type="match status" value="1"/>
</dbReference>
<keyword id="KW-0131">Cell cycle</keyword>
<keyword id="KW-0132">Cell division</keyword>
<keyword id="KW-0997">Cell inner membrane</keyword>
<keyword id="KW-1003">Cell membrane</keyword>
<keyword id="KW-0133">Cell shape</keyword>
<keyword id="KW-0961">Cell wall biogenesis/degradation</keyword>
<keyword id="KW-0328">Glycosyltransferase</keyword>
<keyword id="KW-0472">Membrane</keyword>
<keyword id="KW-0573">Peptidoglycan synthesis</keyword>
<keyword id="KW-0808">Transferase</keyword>
<gene>
    <name evidence="1" type="primary">murG</name>
    <name type="ordered locus">BPP3752</name>
</gene>
<organism>
    <name type="scientific">Bordetella parapertussis (strain 12822 / ATCC BAA-587 / NCTC 13253)</name>
    <dbReference type="NCBI Taxonomy" id="257311"/>
    <lineage>
        <taxon>Bacteria</taxon>
        <taxon>Pseudomonadati</taxon>
        <taxon>Pseudomonadota</taxon>
        <taxon>Betaproteobacteria</taxon>
        <taxon>Burkholderiales</taxon>
        <taxon>Alcaligenaceae</taxon>
        <taxon>Bordetella</taxon>
    </lineage>
</organism>
<protein>
    <recommendedName>
        <fullName evidence="1">UDP-N-acetylglucosamine--N-acetylmuramyl-(pentapeptide) pyrophosphoryl-undecaprenol N-acetylglucosamine transferase</fullName>
        <ecNumber evidence="1">2.4.1.227</ecNumber>
    </recommendedName>
    <alternativeName>
        <fullName evidence="1">Undecaprenyl-PP-MurNAc-pentapeptide-UDPGlcNAc GlcNAc transferase</fullName>
    </alternativeName>
</protein>
<proteinExistence type="inferred from homology"/>